<keyword id="KW-0963">Cytoplasm</keyword>
<keyword id="KW-0342">GTP-binding</keyword>
<keyword id="KW-0396">Initiation factor</keyword>
<keyword id="KW-0547">Nucleotide-binding</keyword>
<keyword id="KW-0648">Protein biosynthesis</keyword>
<dbReference type="EMBL" id="CP000572">
    <property type="protein sequence ID" value="ABN92185.1"/>
    <property type="molecule type" value="Genomic_DNA"/>
</dbReference>
<dbReference type="RefSeq" id="WP_004535877.1">
    <property type="nucleotide sequence ID" value="NC_009076.1"/>
</dbReference>
<dbReference type="SMR" id="A3NUL0"/>
<dbReference type="KEGG" id="bpl:BURPS1106A_1762"/>
<dbReference type="HOGENOM" id="CLU_006301_6_0_4"/>
<dbReference type="Proteomes" id="UP000006738">
    <property type="component" value="Chromosome I"/>
</dbReference>
<dbReference type="GO" id="GO:0005829">
    <property type="term" value="C:cytosol"/>
    <property type="evidence" value="ECO:0007669"/>
    <property type="project" value="TreeGrafter"/>
</dbReference>
<dbReference type="GO" id="GO:0005525">
    <property type="term" value="F:GTP binding"/>
    <property type="evidence" value="ECO:0007669"/>
    <property type="project" value="UniProtKB-KW"/>
</dbReference>
<dbReference type="GO" id="GO:0003924">
    <property type="term" value="F:GTPase activity"/>
    <property type="evidence" value="ECO:0007669"/>
    <property type="project" value="UniProtKB-UniRule"/>
</dbReference>
<dbReference type="GO" id="GO:0097216">
    <property type="term" value="F:guanosine tetraphosphate binding"/>
    <property type="evidence" value="ECO:0007669"/>
    <property type="project" value="UniProtKB-ARBA"/>
</dbReference>
<dbReference type="GO" id="GO:0003743">
    <property type="term" value="F:translation initiation factor activity"/>
    <property type="evidence" value="ECO:0007669"/>
    <property type="project" value="UniProtKB-UniRule"/>
</dbReference>
<dbReference type="CDD" id="cd01887">
    <property type="entry name" value="IF2_eIF5B"/>
    <property type="match status" value="1"/>
</dbReference>
<dbReference type="CDD" id="cd03702">
    <property type="entry name" value="IF2_mtIF2_II"/>
    <property type="match status" value="1"/>
</dbReference>
<dbReference type="CDD" id="cd03692">
    <property type="entry name" value="mtIF2_IVc"/>
    <property type="match status" value="1"/>
</dbReference>
<dbReference type="FunFam" id="2.40.30.10:FF:000007">
    <property type="entry name" value="Translation initiation factor IF-2"/>
    <property type="match status" value="1"/>
</dbReference>
<dbReference type="FunFam" id="2.40.30.10:FF:000008">
    <property type="entry name" value="Translation initiation factor IF-2"/>
    <property type="match status" value="1"/>
</dbReference>
<dbReference type="FunFam" id="3.40.50.10050:FF:000001">
    <property type="entry name" value="Translation initiation factor IF-2"/>
    <property type="match status" value="1"/>
</dbReference>
<dbReference type="FunFam" id="3.40.50.300:FF:000019">
    <property type="entry name" value="Translation initiation factor IF-2"/>
    <property type="match status" value="1"/>
</dbReference>
<dbReference type="Gene3D" id="3.40.50.300">
    <property type="entry name" value="P-loop containing nucleotide triphosphate hydrolases"/>
    <property type="match status" value="1"/>
</dbReference>
<dbReference type="Gene3D" id="3.30.56.50">
    <property type="entry name" value="Putative DNA-binding domain, N-terminal subdomain of bacterial translation initiation factor IF2"/>
    <property type="match status" value="1"/>
</dbReference>
<dbReference type="Gene3D" id="2.40.30.10">
    <property type="entry name" value="Translation factors"/>
    <property type="match status" value="2"/>
</dbReference>
<dbReference type="Gene3D" id="3.40.50.10050">
    <property type="entry name" value="Translation initiation factor IF- 2, domain 3"/>
    <property type="match status" value="1"/>
</dbReference>
<dbReference type="HAMAP" id="MF_00100_B">
    <property type="entry name" value="IF_2_B"/>
    <property type="match status" value="1"/>
</dbReference>
<dbReference type="InterPro" id="IPR009061">
    <property type="entry name" value="DNA-bd_dom_put_sf"/>
</dbReference>
<dbReference type="InterPro" id="IPR053905">
    <property type="entry name" value="EF-G-like_DII"/>
</dbReference>
<dbReference type="InterPro" id="IPR004161">
    <property type="entry name" value="EFTu-like_2"/>
</dbReference>
<dbReference type="InterPro" id="IPR013575">
    <property type="entry name" value="IF2_assoc_dom_bac"/>
</dbReference>
<dbReference type="InterPro" id="IPR044145">
    <property type="entry name" value="IF2_II"/>
</dbReference>
<dbReference type="InterPro" id="IPR006847">
    <property type="entry name" value="IF2_N"/>
</dbReference>
<dbReference type="InterPro" id="IPR027417">
    <property type="entry name" value="P-loop_NTPase"/>
</dbReference>
<dbReference type="InterPro" id="IPR005225">
    <property type="entry name" value="Small_GTP-bd"/>
</dbReference>
<dbReference type="InterPro" id="IPR000795">
    <property type="entry name" value="T_Tr_GTP-bd_dom"/>
</dbReference>
<dbReference type="InterPro" id="IPR000178">
    <property type="entry name" value="TF_IF2_bacterial-like"/>
</dbReference>
<dbReference type="InterPro" id="IPR015760">
    <property type="entry name" value="TIF_IF2"/>
</dbReference>
<dbReference type="InterPro" id="IPR023115">
    <property type="entry name" value="TIF_IF2_dom3"/>
</dbReference>
<dbReference type="InterPro" id="IPR036925">
    <property type="entry name" value="TIF_IF2_dom3_sf"/>
</dbReference>
<dbReference type="InterPro" id="IPR009000">
    <property type="entry name" value="Transl_B-barrel_sf"/>
</dbReference>
<dbReference type="NCBIfam" id="TIGR00487">
    <property type="entry name" value="IF-2"/>
    <property type="match status" value="1"/>
</dbReference>
<dbReference type="NCBIfam" id="TIGR00231">
    <property type="entry name" value="small_GTP"/>
    <property type="match status" value="1"/>
</dbReference>
<dbReference type="PANTHER" id="PTHR43381:SF5">
    <property type="entry name" value="TR-TYPE G DOMAIN-CONTAINING PROTEIN"/>
    <property type="match status" value="1"/>
</dbReference>
<dbReference type="PANTHER" id="PTHR43381">
    <property type="entry name" value="TRANSLATION INITIATION FACTOR IF-2-RELATED"/>
    <property type="match status" value="1"/>
</dbReference>
<dbReference type="Pfam" id="PF22042">
    <property type="entry name" value="EF-G_D2"/>
    <property type="match status" value="1"/>
</dbReference>
<dbReference type="Pfam" id="PF00009">
    <property type="entry name" value="GTP_EFTU"/>
    <property type="match status" value="1"/>
</dbReference>
<dbReference type="Pfam" id="PF03144">
    <property type="entry name" value="GTP_EFTU_D2"/>
    <property type="match status" value="1"/>
</dbReference>
<dbReference type="Pfam" id="PF11987">
    <property type="entry name" value="IF-2"/>
    <property type="match status" value="1"/>
</dbReference>
<dbReference type="Pfam" id="PF08364">
    <property type="entry name" value="IF2_assoc"/>
    <property type="match status" value="1"/>
</dbReference>
<dbReference type="Pfam" id="PF04760">
    <property type="entry name" value="IF2_N"/>
    <property type="match status" value="2"/>
</dbReference>
<dbReference type="SUPFAM" id="SSF52156">
    <property type="entry name" value="Initiation factor IF2/eIF5b, domain 3"/>
    <property type="match status" value="1"/>
</dbReference>
<dbReference type="SUPFAM" id="SSF52540">
    <property type="entry name" value="P-loop containing nucleoside triphosphate hydrolases"/>
    <property type="match status" value="1"/>
</dbReference>
<dbReference type="SUPFAM" id="SSF46955">
    <property type="entry name" value="Putative DNA-binding domain"/>
    <property type="match status" value="1"/>
</dbReference>
<dbReference type="SUPFAM" id="SSF50447">
    <property type="entry name" value="Translation proteins"/>
    <property type="match status" value="2"/>
</dbReference>
<dbReference type="PROSITE" id="PS51722">
    <property type="entry name" value="G_TR_2"/>
    <property type="match status" value="1"/>
</dbReference>
<dbReference type="PROSITE" id="PS01176">
    <property type="entry name" value="IF2"/>
    <property type="match status" value="1"/>
</dbReference>
<comment type="function">
    <text evidence="2">One of the essential components for the initiation of protein synthesis. Protects formylmethionyl-tRNA from spontaneous hydrolysis and promotes its binding to the 30S ribosomal subunits. Also involved in the hydrolysis of GTP during the formation of the 70S ribosomal complex.</text>
</comment>
<comment type="subcellular location">
    <subcellularLocation>
        <location evidence="2">Cytoplasm</location>
    </subcellularLocation>
</comment>
<comment type="similarity">
    <text evidence="2">Belongs to the TRAFAC class translation factor GTPase superfamily. Classic translation factor GTPase family. IF-2 subfamily.</text>
</comment>
<sequence length="975" mass="104804">MASNNVAQFAAELKMPAGVLLEQLQAAGVQKASEDDALSETDKARLLDHLRKSHGATDGDKRKITLTRRHTSEIKQADATGKARTIQVEVRKKRTFVKRDDVSETGADQAHAQTDEQAEAELKRREEEARREAELLEKQAQELRERQERLEREEAERRAREEAAEAERRRAEEEAAAKRAAAAQAEAAQQAAAAREQAQRAQSEPAEQSAQDEARAAAERAAQREAAKKAEDAAREAADKARAEQEEIRKRREAAEAEARAIREMMNTPRRAQVKAVEPPKPAEPPAAKTAEAKGTLHKPAKPAGEAAAARPAAKKPASGAPAPAAAPAGDRTKKPGTGKSGWQDDAAKRRGIKTRGDSSGGVDRGWRGGPKGRGKHQDSASSFQAPTEPIVREVHVPETISVADLAHKMSIKASEVIKVMMKMGQMVTINQVLDQETAMIVVEELGHRALAAKLDDPEALLVEGEIGSDAEQLPRPPVVTVMGHVDHGKTSLLDYIRRAKVAAGEAGGITQHIGAYHVETPRGVVTFLDTPGHEAFTAMRARGAKATDIVILVVAADDGVMPQTKEAISHAKAGGVPIVVAINKIDKPEANPDRVKQELVAEGVVPEEYGGDSPFVPVSAKTGAGIDDLLENVLLQAEVLELKAPVESPAKGIVIEAKLDKGKGPVATVLVQSGTLSRGDVVLAGTAYGRVRAMLDENGKPTKEAGPSIPVEIQGLSEVPGAGEEVIVLPDERKAREIALFRQGKFRDVKLAKQQAAKLESMLEQMGEGEVQNLPLIIKADVQGSQEALVQSLLKLSTDEVRVQIVHSAVGGISESDVNLATASKAVIIGFNTRADAQARKLAEANGIDIRYYNIIYDAVDEVKAAMSGMLAPEKREVVTGMVEVRQVFKVPKVGTVAGCMVTDGVVKRSSSVRVLRNNVVIFTGELDSLKRFKDDVKEVKQGFECGMSLKNFNDIVEGDQFEVFEVTEVARTL</sequence>
<protein>
    <recommendedName>
        <fullName evidence="2">Translation initiation factor IF-2</fullName>
    </recommendedName>
</protein>
<reference key="1">
    <citation type="journal article" date="2010" name="Genome Biol. Evol.">
        <title>Continuing evolution of Burkholderia mallei through genome reduction and large-scale rearrangements.</title>
        <authorList>
            <person name="Losada L."/>
            <person name="Ronning C.M."/>
            <person name="DeShazer D."/>
            <person name="Woods D."/>
            <person name="Fedorova N."/>
            <person name="Kim H.S."/>
            <person name="Shabalina S.A."/>
            <person name="Pearson T.R."/>
            <person name="Brinkac L."/>
            <person name="Tan P."/>
            <person name="Nandi T."/>
            <person name="Crabtree J."/>
            <person name="Badger J."/>
            <person name="Beckstrom-Sternberg S."/>
            <person name="Saqib M."/>
            <person name="Schutzer S.E."/>
            <person name="Keim P."/>
            <person name="Nierman W.C."/>
        </authorList>
    </citation>
    <scope>NUCLEOTIDE SEQUENCE [LARGE SCALE GENOMIC DNA]</scope>
    <source>
        <strain>1106a</strain>
    </source>
</reference>
<proteinExistence type="inferred from homology"/>
<gene>
    <name evidence="2" type="primary">infB</name>
    <name type="ordered locus">BURPS1106A_1762</name>
</gene>
<organism>
    <name type="scientific">Burkholderia pseudomallei (strain 1106a)</name>
    <dbReference type="NCBI Taxonomy" id="357348"/>
    <lineage>
        <taxon>Bacteria</taxon>
        <taxon>Pseudomonadati</taxon>
        <taxon>Pseudomonadota</taxon>
        <taxon>Betaproteobacteria</taxon>
        <taxon>Burkholderiales</taxon>
        <taxon>Burkholderiaceae</taxon>
        <taxon>Burkholderia</taxon>
        <taxon>pseudomallei group</taxon>
    </lineage>
</organism>
<evidence type="ECO:0000250" key="1"/>
<evidence type="ECO:0000255" key="2">
    <source>
        <dbReference type="HAMAP-Rule" id="MF_00100"/>
    </source>
</evidence>
<evidence type="ECO:0000256" key="3">
    <source>
        <dbReference type="SAM" id="MobiDB-lite"/>
    </source>
</evidence>
<feature type="chain" id="PRO_1000008214" description="Translation initiation factor IF-2">
    <location>
        <begin position="1"/>
        <end position="975"/>
    </location>
</feature>
<feature type="domain" description="tr-type G">
    <location>
        <begin position="475"/>
        <end position="644"/>
    </location>
</feature>
<feature type="region of interest" description="Disordered" evidence="3">
    <location>
        <begin position="48"/>
        <end position="85"/>
    </location>
</feature>
<feature type="region of interest" description="Disordered" evidence="3">
    <location>
        <begin position="98"/>
        <end position="390"/>
    </location>
</feature>
<feature type="region of interest" description="G1" evidence="1">
    <location>
        <begin position="484"/>
        <end position="491"/>
    </location>
</feature>
<feature type="region of interest" description="G2" evidence="1">
    <location>
        <begin position="509"/>
        <end position="513"/>
    </location>
</feature>
<feature type="region of interest" description="G3" evidence="1">
    <location>
        <begin position="530"/>
        <end position="533"/>
    </location>
</feature>
<feature type="region of interest" description="G4" evidence="1">
    <location>
        <begin position="584"/>
        <end position="587"/>
    </location>
</feature>
<feature type="region of interest" description="G5" evidence="1">
    <location>
        <begin position="620"/>
        <end position="622"/>
    </location>
</feature>
<feature type="compositionally biased region" description="Basic and acidic residues" evidence="3">
    <location>
        <begin position="48"/>
        <end position="63"/>
    </location>
</feature>
<feature type="compositionally biased region" description="Basic and acidic residues" evidence="3">
    <location>
        <begin position="120"/>
        <end position="177"/>
    </location>
</feature>
<feature type="compositionally biased region" description="Low complexity" evidence="3">
    <location>
        <begin position="178"/>
        <end position="211"/>
    </location>
</feature>
<feature type="compositionally biased region" description="Basic and acidic residues" evidence="3">
    <location>
        <begin position="212"/>
        <end position="263"/>
    </location>
</feature>
<feature type="compositionally biased region" description="Low complexity" evidence="3">
    <location>
        <begin position="302"/>
        <end position="330"/>
    </location>
</feature>
<feature type="compositionally biased region" description="Gly residues" evidence="3">
    <location>
        <begin position="359"/>
        <end position="372"/>
    </location>
</feature>
<feature type="binding site" evidence="2">
    <location>
        <begin position="484"/>
        <end position="491"/>
    </location>
    <ligand>
        <name>GTP</name>
        <dbReference type="ChEBI" id="CHEBI:37565"/>
    </ligand>
</feature>
<feature type="binding site" evidence="2">
    <location>
        <begin position="530"/>
        <end position="534"/>
    </location>
    <ligand>
        <name>GTP</name>
        <dbReference type="ChEBI" id="CHEBI:37565"/>
    </ligand>
</feature>
<feature type="binding site" evidence="2">
    <location>
        <begin position="584"/>
        <end position="587"/>
    </location>
    <ligand>
        <name>GTP</name>
        <dbReference type="ChEBI" id="CHEBI:37565"/>
    </ligand>
</feature>
<accession>A3NUL0</accession>
<name>IF2_BURP0</name>